<name>DAPF_YERPN</name>
<evidence type="ECO:0000255" key="1">
    <source>
        <dbReference type="HAMAP-Rule" id="MF_00197"/>
    </source>
</evidence>
<sequence length="274" mass="30252">MQFSKMHGLGNDFMVVDAVTQNVYFSPELIRRLADRHTGVGFDQMLVVEPPYDPELDFHYRIFNADGSEVSQCGNGARCFARFVRLKGLTNKREISVSTQTGRMILSVTEDEQVCVNMGEPDFEPQTVPFRAAKAEKTYILRAAEHTVLCGVVSMGNPHCVMQVDDVSVANVALLGPVLENHERFPERANIGFMQVVSRDHIRLRVYERGAGETQACGSGACAAVAVGVVQDLLNENVHVELPGGSLHIRWQGPGHPLYMTGPATHVYDGFIHL</sequence>
<keyword id="KW-0028">Amino-acid biosynthesis</keyword>
<keyword id="KW-0963">Cytoplasm</keyword>
<keyword id="KW-0413">Isomerase</keyword>
<keyword id="KW-0457">Lysine biosynthesis</keyword>
<accession>Q1CNH8</accession>
<accession>D1Q108</accession>
<reference key="1">
    <citation type="journal article" date="2006" name="J. Bacteriol.">
        <title>Complete genome sequence of Yersinia pestis strains Antiqua and Nepal516: evidence of gene reduction in an emerging pathogen.</title>
        <authorList>
            <person name="Chain P.S.G."/>
            <person name="Hu P."/>
            <person name="Malfatti S.A."/>
            <person name="Radnedge L."/>
            <person name="Larimer F."/>
            <person name="Vergez L.M."/>
            <person name="Worsham P."/>
            <person name="Chu M.C."/>
            <person name="Andersen G.L."/>
        </authorList>
    </citation>
    <scope>NUCLEOTIDE SEQUENCE [LARGE SCALE GENOMIC DNA]</scope>
    <source>
        <strain>Nepal516</strain>
    </source>
</reference>
<reference key="2">
    <citation type="submission" date="2009-04" db="EMBL/GenBank/DDBJ databases">
        <title>Yersinia pestis Nepal516A whole genome shotgun sequencing project.</title>
        <authorList>
            <person name="Plunkett G. III"/>
            <person name="Anderson B.D."/>
            <person name="Baumler D.J."/>
            <person name="Burland V."/>
            <person name="Cabot E.L."/>
            <person name="Glasner J.D."/>
            <person name="Mau B."/>
            <person name="Neeno-Eckwall E."/>
            <person name="Perna N.T."/>
            <person name="Munk A.C."/>
            <person name="Tapia R."/>
            <person name="Green L.D."/>
            <person name="Rogers Y.C."/>
            <person name="Detter J.C."/>
            <person name="Bruce D.C."/>
            <person name="Brettin T.S."/>
        </authorList>
    </citation>
    <scope>NUCLEOTIDE SEQUENCE [LARGE SCALE GENOMIC DNA]</scope>
    <source>
        <strain>Nepal516</strain>
    </source>
</reference>
<proteinExistence type="inferred from homology"/>
<protein>
    <recommendedName>
        <fullName evidence="1">Diaminopimelate epimerase</fullName>
        <shortName evidence="1">DAP epimerase</shortName>
        <ecNumber evidence="1">5.1.1.7</ecNumber>
    </recommendedName>
    <alternativeName>
        <fullName evidence="1">PLP-independent amino acid racemase</fullName>
    </alternativeName>
</protein>
<feature type="chain" id="PRO_1000011988" description="Diaminopimelate epimerase">
    <location>
        <begin position="1"/>
        <end position="274"/>
    </location>
</feature>
<feature type="active site" description="Proton donor" evidence="1">
    <location>
        <position position="73"/>
    </location>
</feature>
<feature type="active site" description="Proton acceptor" evidence="1">
    <location>
        <position position="217"/>
    </location>
</feature>
<feature type="binding site" evidence="1">
    <location>
        <position position="11"/>
    </location>
    <ligand>
        <name>substrate</name>
    </ligand>
</feature>
<feature type="binding site" evidence="1">
    <location>
        <position position="44"/>
    </location>
    <ligand>
        <name>substrate</name>
    </ligand>
</feature>
<feature type="binding site" evidence="1">
    <location>
        <position position="64"/>
    </location>
    <ligand>
        <name>substrate</name>
    </ligand>
</feature>
<feature type="binding site" evidence="1">
    <location>
        <begin position="74"/>
        <end position="75"/>
    </location>
    <ligand>
        <name>substrate</name>
    </ligand>
</feature>
<feature type="binding site" evidence="1">
    <location>
        <position position="157"/>
    </location>
    <ligand>
        <name>substrate</name>
    </ligand>
</feature>
<feature type="binding site" evidence="1">
    <location>
        <position position="190"/>
    </location>
    <ligand>
        <name>substrate</name>
    </ligand>
</feature>
<feature type="binding site" evidence="1">
    <location>
        <begin position="208"/>
        <end position="209"/>
    </location>
    <ligand>
        <name>substrate</name>
    </ligand>
</feature>
<feature type="binding site" evidence="1">
    <location>
        <begin position="218"/>
        <end position="219"/>
    </location>
    <ligand>
        <name>substrate</name>
    </ligand>
</feature>
<feature type="site" description="Could be important to modulate the pK values of the two catalytic cysteine residues" evidence="1">
    <location>
        <position position="159"/>
    </location>
</feature>
<feature type="site" description="Could be important to modulate the pK values of the two catalytic cysteine residues" evidence="1">
    <location>
        <position position="208"/>
    </location>
</feature>
<feature type="site" description="Important for dimerization" evidence="1">
    <location>
        <position position="268"/>
    </location>
</feature>
<dbReference type="EC" id="5.1.1.7" evidence="1"/>
<dbReference type="EMBL" id="CP000305">
    <property type="protein sequence ID" value="ABG16452.1"/>
    <property type="molecule type" value="Genomic_DNA"/>
</dbReference>
<dbReference type="EMBL" id="ACNQ01000001">
    <property type="protein sequence ID" value="EEO78562.1"/>
    <property type="molecule type" value="Genomic_DNA"/>
</dbReference>
<dbReference type="RefSeq" id="WP_002211471.1">
    <property type="nucleotide sequence ID" value="NZ_ACNQ01000001.1"/>
</dbReference>
<dbReference type="SMR" id="Q1CNH8"/>
<dbReference type="GeneID" id="57974864"/>
<dbReference type="KEGG" id="ypn:YPN_0119"/>
<dbReference type="HOGENOM" id="CLU_053306_1_1_6"/>
<dbReference type="UniPathway" id="UPA00034">
    <property type="reaction ID" value="UER00025"/>
</dbReference>
<dbReference type="Proteomes" id="UP000008936">
    <property type="component" value="Chromosome"/>
</dbReference>
<dbReference type="GO" id="GO:0005829">
    <property type="term" value="C:cytosol"/>
    <property type="evidence" value="ECO:0007669"/>
    <property type="project" value="TreeGrafter"/>
</dbReference>
<dbReference type="GO" id="GO:0008837">
    <property type="term" value="F:diaminopimelate epimerase activity"/>
    <property type="evidence" value="ECO:0007669"/>
    <property type="project" value="UniProtKB-UniRule"/>
</dbReference>
<dbReference type="GO" id="GO:0009089">
    <property type="term" value="P:lysine biosynthetic process via diaminopimelate"/>
    <property type="evidence" value="ECO:0007669"/>
    <property type="project" value="UniProtKB-UniRule"/>
</dbReference>
<dbReference type="FunFam" id="3.10.310.10:FF:000001">
    <property type="entry name" value="Diaminopimelate epimerase"/>
    <property type="match status" value="1"/>
</dbReference>
<dbReference type="FunFam" id="3.10.310.10:FF:000002">
    <property type="entry name" value="Diaminopimelate epimerase"/>
    <property type="match status" value="1"/>
</dbReference>
<dbReference type="Gene3D" id="3.10.310.10">
    <property type="entry name" value="Diaminopimelate Epimerase, Chain A, domain 1"/>
    <property type="match status" value="2"/>
</dbReference>
<dbReference type="HAMAP" id="MF_00197">
    <property type="entry name" value="DAP_epimerase"/>
    <property type="match status" value="1"/>
</dbReference>
<dbReference type="InterPro" id="IPR018510">
    <property type="entry name" value="DAP_epimerase_AS"/>
</dbReference>
<dbReference type="InterPro" id="IPR001653">
    <property type="entry name" value="DAP_epimerase_DapF"/>
</dbReference>
<dbReference type="NCBIfam" id="TIGR00652">
    <property type="entry name" value="DapF"/>
    <property type="match status" value="1"/>
</dbReference>
<dbReference type="PANTHER" id="PTHR31689:SF0">
    <property type="entry name" value="DIAMINOPIMELATE EPIMERASE"/>
    <property type="match status" value="1"/>
</dbReference>
<dbReference type="PANTHER" id="PTHR31689">
    <property type="entry name" value="DIAMINOPIMELATE EPIMERASE, CHLOROPLASTIC"/>
    <property type="match status" value="1"/>
</dbReference>
<dbReference type="Pfam" id="PF01678">
    <property type="entry name" value="DAP_epimerase"/>
    <property type="match status" value="2"/>
</dbReference>
<dbReference type="SUPFAM" id="SSF54506">
    <property type="entry name" value="Diaminopimelate epimerase-like"/>
    <property type="match status" value="1"/>
</dbReference>
<dbReference type="PROSITE" id="PS01326">
    <property type="entry name" value="DAP_EPIMERASE"/>
    <property type="match status" value="1"/>
</dbReference>
<comment type="function">
    <text evidence="1">Catalyzes the stereoinversion of LL-2,6-diaminopimelate (L,L-DAP) to meso-diaminopimelate (meso-DAP), a precursor of L-lysine and an essential component of the bacterial peptidoglycan.</text>
</comment>
<comment type="catalytic activity">
    <reaction evidence="1">
        <text>(2S,6S)-2,6-diaminopimelate = meso-2,6-diaminopimelate</text>
        <dbReference type="Rhea" id="RHEA:15393"/>
        <dbReference type="ChEBI" id="CHEBI:57609"/>
        <dbReference type="ChEBI" id="CHEBI:57791"/>
        <dbReference type="EC" id="5.1.1.7"/>
    </reaction>
</comment>
<comment type="pathway">
    <text evidence="1">Amino-acid biosynthesis; L-lysine biosynthesis via DAP pathway; DL-2,6-diaminopimelate from LL-2,6-diaminopimelate: step 1/1.</text>
</comment>
<comment type="subunit">
    <text evidence="1">Homodimer.</text>
</comment>
<comment type="subcellular location">
    <subcellularLocation>
        <location evidence="1">Cytoplasm</location>
    </subcellularLocation>
</comment>
<comment type="similarity">
    <text evidence="1">Belongs to the diaminopimelate epimerase family.</text>
</comment>
<organism>
    <name type="scientific">Yersinia pestis bv. Antiqua (strain Nepal516)</name>
    <dbReference type="NCBI Taxonomy" id="377628"/>
    <lineage>
        <taxon>Bacteria</taxon>
        <taxon>Pseudomonadati</taxon>
        <taxon>Pseudomonadota</taxon>
        <taxon>Gammaproteobacteria</taxon>
        <taxon>Enterobacterales</taxon>
        <taxon>Yersiniaceae</taxon>
        <taxon>Yersinia</taxon>
    </lineage>
</organism>
<gene>
    <name evidence="1" type="primary">dapF</name>
    <name type="ordered locus">YPN_0119</name>
    <name type="ORF">YP516_0080</name>
</gene>